<accession>P45962</accession>
<accession>Q7JMP3</accession>
<accession>Q7JMP4</accession>
<evidence type="ECO:0000255" key="1"/>
<evidence type="ECO:0000255" key="2">
    <source>
        <dbReference type="PROSITE-ProRule" id="PRU00283"/>
    </source>
</evidence>
<evidence type="ECO:0000256" key="3">
    <source>
        <dbReference type="SAM" id="MobiDB-lite"/>
    </source>
</evidence>
<evidence type="ECO:0000305" key="4"/>
<protein>
    <recommendedName>
        <fullName>Kinesin-like protein klp-3</fullName>
    </recommendedName>
</protein>
<feature type="chain" id="PRO_0000125457" description="Kinesin-like protein klp-3">
    <location>
        <begin position="1"/>
        <end position="598"/>
    </location>
</feature>
<feature type="domain" description="Kinesin motor" evidence="2">
    <location>
        <begin position="245"/>
        <end position="565"/>
    </location>
</feature>
<feature type="region of interest" description="Disordered" evidence="3">
    <location>
        <begin position="133"/>
        <end position="155"/>
    </location>
</feature>
<feature type="region of interest" description="Disordered" evidence="3">
    <location>
        <begin position="569"/>
        <end position="598"/>
    </location>
</feature>
<feature type="coiled-coil region" evidence="1">
    <location>
        <begin position="19"/>
        <end position="66"/>
    </location>
</feature>
<feature type="coiled-coil region" evidence="1">
    <location>
        <begin position="89"/>
        <end position="118"/>
    </location>
</feature>
<feature type="coiled-coil region" evidence="1">
    <location>
        <begin position="170"/>
        <end position="248"/>
    </location>
</feature>
<feature type="compositionally biased region" description="Polar residues" evidence="3">
    <location>
        <begin position="136"/>
        <end position="150"/>
    </location>
</feature>
<feature type="binding site" evidence="2">
    <location>
        <begin position="328"/>
        <end position="335"/>
    </location>
    <ligand>
        <name>ATP</name>
        <dbReference type="ChEBI" id="CHEBI:30616"/>
    </ligand>
</feature>
<feature type="splice variant" id="VSP_020786" description="In isoform c." evidence="4">
    <location>
        <begin position="66"/>
        <end position="82"/>
    </location>
</feature>
<feature type="splice variant" id="VSP_020787" description="In isoform b and isoform c." evidence="4">
    <original>S</original>
    <variation>R</variation>
    <location>
        <position position="135"/>
    </location>
</feature>
<feature type="splice variant" id="VSP_020788" description="In isoform b and isoform c." evidence="4">
    <location>
        <begin position="136"/>
        <end position="598"/>
    </location>
</feature>
<organism>
    <name type="scientific">Caenorhabditis elegans</name>
    <dbReference type="NCBI Taxonomy" id="6239"/>
    <lineage>
        <taxon>Eukaryota</taxon>
        <taxon>Metazoa</taxon>
        <taxon>Ecdysozoa</taxon>
        <taxon>Nematoda</taxon>
        <taxon>Chromadorea</taxon>
        <taxon>Rhabditida</taxon>
        <taxon>Rhabditina</taxon>
        <taxon>Rhabditomorpha</taxon>
        <taxon>Rhabditoidea</taxon>
        <taxon>Rhabditidae</taxon>
        <taxon>Peloderinae</taxon>
        <taxon>Caenorhabditis</taxon>
    </lineage>
</organism>
<dbReference type="EMBL" id="Z36753">
    <property type="protein sequence ID" value="CAA85331.1"/>
    <property type="molecule type" value="Genomic_DNA"/>
</dbReference>
<dbReference type="EMBL" id="Z36753">
    <property type="protein sequence ID" value="CAF31495.1"/>
    <property type="molecule type" value="Genomic_DNA"/>
</dbReference>
<dbReference type="EMBL" id="Z36753">
    <property type="protein sequence ID" value="CAF31496.1"/>
    <property type="molecule type" value="Genomic_DNA"/>
</dbReference>
<dbReference type="PIR" id="T24717">
    <property type="entry name" value="T24717"/>
</dbReference>
<dbReference type="RefSeq" id="NP_001022332.1">
    <molecule id="P45962-1"/>
    <property type="nucleotide sequence ID" value="NM_001027161.4"/>
</dbReference>
<dbReference type="RefSeq" id="NP_001022333.1">
    <property type="nucleotide sequence ID" value="NM_001027162.2"/>
</dbReference>
<dbReference type="RefSeq" id="NP_001022334.1">
    <property type="nucleotide sequence ID" value="NM_001027163.2"/>
</dbReference>
<dbReference type="SMR" id="P45962"/>
<dbReference type="BioGRID" id="56196">
    <property type="interactions" value="9"/>
</dbReference>
<dbReference type="DIP" id="DIP-24659N"/>
<dbReference type="FunCoup" id="P45962">
    <property type="interactions" value="865"/>
</dbReference>
<dbReference type="IntAct" id="P45962">
    <property type="interactions" value="6"/>
</dbReference>
<dbReference type="STRING" id="6239.T09A5.2a.1"/>
<dbReference type="PaxDb" id="6239-T09A5.2a"/>
<dbReference type="PeptideAtlas" id="P45962"/>
<dbReference type="EnsemblMetazoa" id="T09A5.2a.1">
    <molecule id="P45962-1"/>
    <property type="protein sequence ID" value="T09A5.2a.1"/>
    <property type="gene ID" value="WBGene00002216"/>
</dbReference>
<dbReference type="EnsemblMetazoa" id="T09A5.2b.1">
    <property type="protein sequence ID" value="T09A5.2b.1"/>
    <property type="gene ID" value="WBGene00002216"/>
</dbReference>
<dbReference type="EnsemblMetazoa" id="T09A5.2c.1">
    <property type="protein sequence ID" value="T09A5.2c.1"/>
    <property type="gene ID" value="WBGene00002216"/>
</dbReference>
<dbReference type="GeneID" id="191697"/>
<dbReference type="KEGG" id="cel:CELE_T09A5.2"/>
<dbReference type="UCSC" id="T09A5.2a">
    <molecule id="P45962-1"/>
    <property type="organism name" value="c. elegans"/>
</dbReference>
<dbReference type="AGR" id="WB:WBGene00002216"/>
<dbReference type="CTD" id="191697"/>
<dbReference type="WormBase" id="T09A5.2a">
    <molecule id="P45962-1"/>
    <property type="protein sequence ID" value="CE01083"/>
    <property type="gene ID" value="WBGene00002216"/>
    <property type="gene designation" value="klp-3"/>
</dbReference>
<dbReference type="WormBase" id="T09A5.2b">
    <molecule id="P45962-2"/>
    <property type="protein sequence ID" value="CE36407"/>
    <property type="gene ID" value="WBGene00002216"/>
    <property type="gene designation" value="klp-3"/>
</dbReference>
<dbReference type="WormBase" id="T09A5.2c">
    <molecule id="P45962-3"/>
    <property type="protein sequence ID" value="CE36408"/>
    <property type="gene ID" value="WBGene00002216"/>
    <property type="gene designation" value="klp-3"/>
</dbReference>
<dbReference type="eggNOG" id="KOG0239">
    <property type="taxonomic scope" value="Eukaryota"/>
</dbReference>
<dbReference type="GeneTree" id="ENSGT00940000154022"/>
<dbReference type="HOGENOM" id="CLU_001485_12_4_1"/>
<dbReference type="InParanoid" id="P45962"/>
<dbReference type="OMA" id="MDNGVVH"/>
<dbReference type="OrthoDB" id="3176171at2759"/>
<dbReference type="PhylomeDB" id="P45962"/>
<dbReference type="SignaLink" id="P45962"/>
<dbReference type="PRO" id="PR:P45962"/>
<dbReference type="Proteomes" id="UP000001940">
    <property type="component" value="Chromosome II"/>
</dbReference>
<dbReference type="Bgee" id="WBGene00002216">
    <property type="expression patterns" value="Expressed in pharyngeal muscle cell (C elegans) and 3 other cell types or tissues"/>
</dbReference>
<dbReference type="ExpressionAtlas" id="P45962">
    <property type="expression patterns" value="baseline and differential"/>
</dbReference>
<dbReference type="GO" id="GO:0005737">
    <property type="term" value="C:cytoplasm"/>
    <property type="evidence" value="ECO:0007669"/>
    <property type="project" value="UniProtKB-KW"/>
</dbReference>
<dbReference type="GO" id="GO:0005874">
    <property type="term" value="C:microtubule"/>
    <property type="evidence" value="ECO:0007669"/>
    <property type="project" value="UniProtKB-KW"/>
</dbReference>
<dbReference type="GO" id="GO:0015630">
    <property type="term" value="C:microtubule cytoskeleton"/>
    <property type="evidence" value="ECO:0000318"/>
    <property type="project" value="GO_Central"/>
</dbReference>
<dbReference type="GO" id="GO:0005524">
    <property type="term" value="F:ATP binding"/>
    <property type="evidence" value="ECO:0007669"/>
    <property type="project" value="UniProtKB-KW"/>
</dbReference>
<dbReference type="GO" id="GO:0008017">
    <property type="term" value="F:microtubule binding"/>
    <property type="evidence" value="ECO:0000318"/>
    <property type="project" value="GO_Central"/>
</dbReference>
<dbReference type="GO" id="GO:0003777">
    <property type="term" value="F:microtubule motor activity"/>
    <property type="evidence" value="ECO:0007669"/>
    <property type="project" value="InterPro"/>
</dbReference>
<dbReference type="GO" id="GO:0007059">
    <property type="term" value="P:chromosome segregation"/>
    <property type="evidence" value="ECO:0000315"/>
    <property type="project" value="WormBase"/>
</dbReference>
<dbReference type="GO" id="GO:0051304">
    <property type="term" value="P:chromosome separation"/>
    <property type="evidence" value="ECO:0000315"/>
    <property type="project" value="WormBase"/>
</dbReference>
<dbReference type="GO" id="GO:0007018">
    <property type="term" value="P:microtubule-based movement"/>
    <property type="evidence" value="ECO:0007669"/>
    <property type="project" value="InterPro"/>
</dbReference>
<dbReference type="GO" id="GO:0007017">
    <property type="term" value="P:microtubule-based process"/>
    <property type="evidence" value="ECO:0000318"/>
    <property type="project" value="GO_Central"/>
</dbReference>
<dbReference type="CDD" id="cd01366">
    <property type="entry name" value="KISc_C_terminal"/>
    <property type="match status" value="1"/>
</dbReference>
<dbReference type="FunFam" id="3.40.850.10:FF:000066">
    <property type="entry name" value="Kinesin-like protein"/>
    <property type="match status" value="1"/>
</dbReference>
<dbReference type="Gene3D" id="3.40.850.10">
    <property type="entry name" value="Kinesin motor domain"/>
    <property type="match status" value="1"/>
</dbReference>
<dbReference type="InterPro" id="IPR027640">
    <property type="entry name" value="Kinesin-like_fam"/>
</dbReference>
<dbReference type="InterPro" id="IPR019821">
    <property type="entry name" value="Kinesin_motor_CS"/>
</dbReference>
<dbReference type="InterPro" id="IPR001752">
    <property type="entry name" value="Kinesin_motor_dom"/>
</dbReference>
<dbReference type="InterPro" id="IPR036961">
    <property type="entry name" value="Kinesin_motor_dom_sf"/>
</dbReference>
<dbReference type="InterPro" id="IPR027417">
    <property type="entry name" value="P-loop_NTPase"/>
</dbReference>
<dbReference type="PANTHER" id="PTHR47972">
    <property type="entry name" value="KINESIN-LIKE PROTEIN KLP-3"/>
    <property type="match status" value="1"/>
</dbReference>
<dbReference type="PANTHER" id="PTHR47972:SF28">
    <property type="entry name" value="KINESIN-LIKE PROTEIN KLP-3"/>
    <property type="match status" value="1"/>
</dbReference>
<dbReference type="Pfam" id="PF00225">
    <property type="entry name" value="Kinesin"/>
    <property type="match status" value="1"/>
</dbReference>
<dbReference type="PRINTS" id="PR00380">
    <property type="entry name" value="KINESINHEAVY"/>
</dbReference>
<dbReference type="SMART" id="SM00129">
    <property type="entry name" value="KISc"/>
    <property type="match status" value="1"/>
</dbReference>
<dbReference type="SUPFAM" id="SSF52540">
    <property type="entry name" value="P-loop containing nucleoside triphosphate hydrolases"/>
    <property type="match status" value="1"/>
</dbReference>
<dbReference type="PROSITE" id="PS00411">
    <property type="entry name" value="KINESIN_MOTOR_1"/>
    <property type="match status" value="1"/>
</dbReference>
<dbReference type="PROSITE" id="PS50067">
    <property type="entry name" value="KINESIN_MOTOR_2"/>
    <property type="match status" value="1"/>
</dbReference>
<proteinExistence type="evidence at protein level"/>
<keyword id="KW-0025">Alternative splicing</keyword>
<keyword id="KW-0067">ATP-binding</keyword>
<keyword id="KW-0175">Coiled coil</keyword>
<keyword id="KW-0963">Cytoplasm</keyword>
<keyword id="KW-0206">Cytoskeleton</keyword>
<keyword id="KW-0493">Microtubule</keyword>
<keyword id="KW-0505">Motor protein</keyword>
<keyword id="KW-0547">Nucleotide-binding</keyword>
<keyword id="KW-1185">Reference proteome</keyword>
<sequence>MDSHVGEVDIFQQCKYIHEVELVNMKLQMRILETHIETKDRLLRNLEDIIDEQESRIANMEDFIQGRATSYTNRSNMLKGISVLSLDFGNLSEENLRLKNALSQMQKVARVNELLETDEDYESDMTSNEDRFALSRDSSCSVPRSVSPQPTGDVIKPYPQMVQSMREEGHWKKLQRCAEELKTEKDELKRLALDTKDAFNVCMAEMRMMLTSKTTDFFRVLIERYKAEMEKRKQLHNQLVELNGNIRVFYRIRPQLASETDNQKPVVVIDEMDNGVVHVSNTTGTRKTSAGADKVIPTDFSQDQIFNEVSPIITSCIDGYNVCIFAYGHTGSGKTYTMDGPVTMPGINQRAIMQLFETAKERTGDIKYDIKVAMMEIYNEKIRDLLNTSNTNLAIRQTEEGRSSIPGLEEVSVNSAEEVTETLARGRKNKAVAATEANIESSRSHVIVRVLVSATNLITKATTVGRLNLVDLAGSERVSQTNATGQLLKEAQAINKSLSELGNVVLALRQNQKHIPFRNCQLTRILEDSLNGDSKTLVIVHLSPDAKSLNESISSVNFAEKIGQVFTKSGTMKREPTRRSMTGISSGQRREIPASPRK</sequence>
<comment type="interaction">
    <interactant intactId="EBI-311892">
        <id>P45962</id>
    </interactant>
    <interactant intactId="EBI-311898">
        <id>Q9U3B7</id>
        <label>hsb-1</label>
    </interactant>
    <organismsDiffer>false</organismsDiffer>
    <experiments>2</experiments>
</comment>
<comment type="interaction">
    <interactant intactId="EBI-311892">
        <id>P45962</id>
    </interactant>
    <interactant intactId="EBI-325337">
        <id>G5EC32</id>
        <label>sorb-1</label>
    </interactant>
    <organismsDiffer>false</organismsDiffer>
    <experiments>3</experiments>
</comment>
<comment type="subcellular location">
    <subcellularLocation>
        <location evidence="4">Cytoplasm</location>
        <location evidence="4">Cytoskeleton</location>
    </subcellularLocation>
</comment>
<comment type="alternative products">
    <event type="alternative splicing"/>
    <isoform>
        <id>P45962-1</id>
        <name>a</name>
        <sequence type="displayed"/>
    </isoform>
    <isoform>
        <id>P45962-2</id>
        <name>b</name>
        <sequence type="described" ref="VSP_020787 VSP_020788"/>
    </isoform>
    <isoform>
        <id>P45962-3</id>
        <name>c</name>
        <sequence type="described" ref="VSP_020786 VSP_020787 VSP_020788"/>
    </isoform>
</comment>
<comment type="similarity">
    <text evidence="2">Belongs to the TRAFAC class myosin-kinesin ATPase superfamily. Kinesin family.</text>
</comment>
<name>KLP3_CAEEL</name>
<reference key="1">
    <citation type="journal article" date="1998" name="Science">
        <title>Genome sequence of the nematode C. elegans: a platform for investigating biology.</title>
        <authorList>
            <consortium name="The C. elegans sequencing consortium"/>
        </authorList>
    </citation>
    <scope>NUCLEOTIDE SEQUENCE [LARGE SCALE GENOMIC DNA]</scope>
    <scope>ALTERNATIVE SPLICING</scope>
    <source>
        <strain>Bristol N2</strain>
    </source>
</reference>
<gene>
    <name type="primary">klp-3</name>
    <name type="ORF">T09A5.2</name>
</gene>